<protein>
    <recommendedName>
        <fullName>Oxidation resistance protein 1</fullName>
    </recommendedName>
</protein>
<sequence>MSSLSQGDSPSLTATASSSSSSSTSGSRTPKANNSFNQSAASYFSYPVTHVVSGLYRRLTEPNITKASRKDSNSPNRKMNARNNRDSSTTSPDIFVPIRTASPFQPPPLTPLTLTPGPGVPQQQLLTRALAEEIRLLVPARLQLVDTWRLAYSLDRDGASLSTLYEHCRDFSHRSPRAGYVLIVRDSSPAGAVFGAYMTDPPHPDSHYFGTGECFLWRASVLPSPSNLLNINGPQSEEMLERAGLPLPPSADTTHAGRSTTLRGDSRGHGDGRLAAPRANGGTGAGAASGASTPERIRFKAFPYSGVNDYMMFCETGFLSLGGG</sequence>
<reference key="1">
    <citation type="journal article" date="2005" name="Nature">
        <title>Genomic sequence of the pathogenic and allergenic filamentous fungus Aspergillus fumigatus.</title>
        <authorList>
            <person name="Nierman W.C."/>
            <person name="Pain A."/>
            <person name="Anderson M.J."/>
            <person name="Wortman J.R."/>
            <person name="Kim H.S."/>
            <person name="Arroyo J."/>
            <person name="Berriman M."/>
            <person name="Abe K."/>
            <person name="Archer D.B."/>
            <person name="Bermejo C."/>
            <person name="Bennett J.W."/>
            <person name="Bowyer P."/>
            <person name="Chen D."/>
            <person name="Collins M."/>
            <person name="Coulsen R."/>
            <person name="Davies R."/>
            <person name="Dyer P.S."/>
            <person name="Farman M.L."/>
            <person name="Fedorova N."/>
            <person name="Fedorova N.D."/>
            <person name="Feldblyum T.V."/>
            <person name="Fischer R."/>
            <person name="Fosker N."/>
            <person name="Fraser A."/>
            <person name="Garcia J.L."/>
            <person name="Garcia M.J."/>
            <person name="Goble A."/>
            <person name="Goldman G.H."/>
            <person name="Gomi K."/>
            <person name="Griffith-Jones S."/>
            <person name="Gwilliam R."/>
            <person name="Haas B.J."/>
            <person name="Haas H."/>
            <person name="Harris D.E."/>
            <person name="Horiuchi H."/>
            <person name="Huang J."/>
            <person name="Humphray S."/>
            <person name="Jimenez J."/>
            <person name="Keller N."/>
            <person name="Khouri H."/>
            <person name="Kitamoto K."/>
            <person name="Kobayashi T."/>
            <person name="Konzack S."/>
            <person name="Kulkarni R."/>
            <person name="Kumagai T."/>
            <person name="Lafton A."/>
            <person name="Latge J.-P."/>
            <person name="Li W."/>
            <person name="Lord A."/>
            <person name="Lu C."/>
            <person name="Majoros W.H."/>
            <person name="May G.S."/>
            <person name="Miller B.L."/>
            <person name="Mohamoud Y."/>
            <person name="Molina M."/>
            <person name="Monod M."/>
            <person name="Mouyna I."/>
            <person name="Mulligan S."/>
            <person name="Murphy L.D."/>
            <person name="O'Neil S."/>
            <person name="Paulsen I."/>
            <person name="Penalva M.A."/>
            <person name="Pertea M."/>
            <person name="Price C."/>
            <person name="Pritchard B.L."/>
            <person name="Quail M.A."/>
            <person name="Rabbinowitsch E."/>
            <person name="Rawlins N."/>
            <person name="Rajandream M.A."/>
            <person name="Reichard U."/>
            <person name="Renauld H."/>
            <person name="Robson G.D."/>
            <person name="Rodriguez de Cordoba S."/>
            <person name="Rodriguez-Pena J.M."/>
            <person name="Ronning C.M."/>
            <person name="Rutter S."/>
            <person name="Salzberg S.L."/>
            <person name="Sanchez M."/>
            <person name="Sanchez-Ferrero J.C."/>
            <person name="Saunders D."/>
            <person name="Seeger K."/>
            <person name="Squares R."/>
            <person name="Squares S."/>
            <person name="Takeuchi M."/>
            <person name="Tekaia F."/>
            <person name="Turner G."/>
            <person name="Vazquez de Aldana C.R."/>
            <person name="Weidman J."/>
            <person name="White O."/>
            <person name="Woodward J.R."/>
            <person name="Yu J.-H."/>
            <person name="Fraser C.M."/>
            <person name="Galagan J.E."/>
            <person name="Asai K."/>
            <person name="Machida M."/>
            <person name="Hall N."/>
            <person name="Barrell B.G."/>
            <person name="Denning D.W."/>
        </authorList>
    </citation>
    <scope>NUCLEOTIDE SEQUENCE [LARGE SCALE GENOMIC DNA]</scope>
    <source>
        <strain>ATCC MYA-4609 / CBS 101355 / FGSC A1100 / Af293</strain>
    </source>
</reference>
<organism>
    <name type="scientific">Aspergillus fumigatus (strain ATCC MYA-4609 / CBS 101355 / FGSC A1100 / Af293)</name>
    <name type="common">Neosartorya fumigata</name>
    <dbReference type="NCBI Taxonomy" id="330879"/>
    <lineage>
        <taxon>Eukaryota</taxon>
        <taxon>Fungi</taxon>
        <taxon>Dikarya</taxon>
        <taxon>Ascomycota</taxon>
        <taxon>Pezizomycotina</taxon>
        <taxon>Eurotiomycetes</taxon>
        <taxon>Eurotiomycetidae</taxon>
        <taxon>Eurotiales</taxon>
        <taxon>Aspergillaceae</taxon>
        <taxon>Aspergillus</taxon>
        <taxon>Aspergillus subgen. Fumigati</taxon>
    </lineage>
</organism>
<accession>Q4WX99</accession>
<keyword id="KW-0496">Mitochondrion</keyword>
<keyword id="KW-1185">Reference proteome</keyword>
<name>OXR1_ASPFU</name>
<feature type="chain" id="PRO_0000058110" description="Oxidation resistance protein 1">
    <location>
        <begin position="1"/>
        <end position="324"/>
    </location>
</feature>
<feature type="domain" description="TLDc" evidence="2">
    <location>
        <begin position="124"/>
        <end position="324"/>
    </location>
</feature>
<feature type="region of interest" description="Disordered" evidence="3">
    <location>
        <begin position="1"/>
        <end position="35"/>
    </location>
</feature>
<feature type="region of interest" description="Disordered" evidence="3">
    <location>
        <begin position="63"/>
        <end position="113"/>
    </location>
</feature>
<feature type="region of interest" description="Disordered" evidence="3">
    <location>
        <begin position="244"/>
        <end position="292"/>
    </location>
</feature>
<feature type="compositionally biased region" description="Low complexity" evidence="3">
    <location>
        <begin position="9"/>
        <end position="29"/>
    </location>
</feature>
<feature type="compositionally biased region" description="Polar residues" evidence="3">
    <location>
        <begin position="251"/>
        <end position="263"/>
    </location>
</feature>
<gene>
    <name type="primary">oxr1</name>
    <name type="ORF">AFUA_3G08740</name>
</gene>
<proteinExistence type="inferred from homology"/>
<dbReference type="EMBL" id="AAHF01000002">
    <property type="protein sequence ID" value="EAL92704.1"/>
    <property type="molecule type" value="Genomic_DNA"/>
</dbReference>
<dbReference type="RefSeq" id="XP_754742.1">
    <property type="nucleotide sequence ID" value="XM_749649.1"/>
</dbReference>
<dbReference type="SMR" id="Q4WX99"/>
<dbReference type="FunCoup" id="Q4WX99">
    <property type="interactions" value="11"/>
</dbReference>
<dbReference type="STRING" id="330879.Q4WX99"/>
<dbReference type="EnsemblFungi" id="EAL92704">
    <property type="protein sequence ID" value="EAL92704"/>
    <property type="gene ID" value="AFUA_3G08740"/>
</dbReference>
<dbReference type="GeneID" id="3512145"/>
<dbReference type="KEGG" id="afm:AFUA_3G08740"/>
<dbReference type="eggNOG" id="KOG2372">
    <property type="taxonomic scope" value="Eukaryota"/>
</dbReference>
<dbReference type="HOGENOM" id="CLU_029204_0_1_1"/>
<dbReference type="InParanoid" id="Q4WX99"/>
<dbReference type="OMA" id="MPSVMPW"/>
<dbReference type="OrthoDB" id="26679at2759"/>
<dbReference type="Proteomes" id="UP000002530">
    <property type="component" value="Chromosome 3"/>
</dbReference>
<dbReference type="GO" id="GO:0005739">
    <property type="term" value="C:mitochondrion"/>
    <property type="evidence" value="ECO:0007669"/>
    <property type="project" value="UniProtKB-SubCell"/>
</dbReference>
<dbReference type="GO" id="GO:0005634">
    <property type="term" value="C:nucleus"/>
    <property type="evidence" value="ECO:0000318"/>
    <property type="project" value="GO_Central"/>
</dbReference>
<dbReference type="GO" id="GO:0006979">
    <property type="term" value="P:response to oxidative stress"/>
    <property type="evidence" value="ECO:0000318"/>
    <property type="project" value="GO_Central"/>
</dbReference>
<dbReference type="InterPro" id="IPR006571">
    <property type="entry name" value="TLDc_dom"/>
</dbReference>
<dbReference type="PANTHER" id="PTHR23354:SF62">
    <property type="entry name" value="MUSTARD, ISOFORM V"/>
    <property type="match status" value="1"/>
</dbReference>
<dbReference type="PANTHER" id="PTHR23354">
    <property type="entry name" value="NUCLEOLAR PROTEIN 7/ESTROGEN RECEPTOR COACTIVATOR-RELATED"/>
    <property type="match status" value="1"/>
</dbReference>
<dbReference type="Pfam" id="PF07534">
    <property type="entry name" value="TLD"/>
    <property type="match status" value="1"/>
</dbReference>
<dbReference type="SMART" id="SM00584">
    <property type="entry name" value="TLDc"/>
    <property type="match status" value="1"/>
</dbReference>
<dbReference type="PROSITE" id="PS51886">
    <property type="entry name" value="TLDC"/>
    <property type="match status" value="1"/>
</dbReference>
<evidence type="ECO:0000250" key="1"/>
<evidence type="ECO:0000255" key="2">
    <source>
        <dbReference type="PROSITE-ProRule" id="PRU01234"/>
    </source>
</evidence>
<evidence type="ECO:0000256" key="3">
    <source>
        <dbReference type="SAM" id="MobiDB-lite"/>
    </source>
</evidence>
<evidence type="ECO:0000305" key="4"/>
<comment type="function">
    <text evidence="1">May be involved in protection from oxidative damage.</text>
</comment>
<comment type="subcellular location">
    <subcellularLocation>
        <location evidence="1">Mitochondrion</location>
    </subcellularLocation>
</comment>
<comment type="similarity">
    <text evidence="4">Belongs to the OXR1 family.</text>
</comment>